<sequence length="271" mass="30431">MAASSLSSATSYLHSFRRRNSCVSLQGVSDMECNIARTNVSVWRSSANYVRMDCGVKKFSGKAVVVKQLQNRAGTFRCATMEEVEAEKSLIETNTKQRMEKTIETIRSNFNSVRTNRASPTMLDRIEVEYYGTPVSLKSIAQISTPDASSLLISPYDKSSLKAIEKAIVTSQLGVSPNNDGEVIRLSLPPLTSDRRKELAKVVSKLAEEGKVAVRNIRRDALKSYEKLEKEKKLSEDNVKDLSADLQKLTDEYMKKVESIYKQKEQELMKV</sequence>
<protein>
    <recommendedName>
        <fullName>Ribosome-recycling factor, chloroplastic</fullName>
        <shortName>RRF</shortName>
    </recommendedName>
    <alternativeName>
        <fullName>CpFrr</fullName>
    </alternativeName>
    <alternativeName>
        <fullName>RRFHCP</fullName>
    </alternativeName>
    <alternativeName>
        <fullName>Ribosome-releasing factor, chloroplastic</fullName>
    </alternativeName>
</protein>
<comment type="function">
    <text evidence="1">Responsible for the release of ribosomes from messenger RNA at the termination of chloroplastic protein biosynthesis.</text>
</comment>
<comment type="subunit">
    <text evidence="5">Modeling onto the 70S ribosome suggests it binds to PSRP1.</text>
</comment>
<comment type="subcellular location">
    <subcellularLocation>
        <location>Plastid</location>
        <location>Chloroplast stroma</location>
    </subcellularLocation>
    <text>The major part was found in the stroma and some protein was in the envelope subfraction, but no protein was detected in the thylakoids.</text>
</comment>
<comment type="tissue specificity">
    <text>Restricted to photosynthetic tissues.</text>
</comment>
<comment type="miscellaneous">
    <text>Expression seems to be light-independent.</text>
</comment>
<comment type="similarity">
    <text evidence="6">Belongs to the RRF family.</text>
</comment>
<reference key="1">
    <citation type="journal article" date="1999" name="Proc. Natl. Acad. Sci. U.S.A.">
        <title>Plant ribosome recycling factor homologue is a chloroplastic protein and is bactericidal in Escherichia coli carrying temperature-sensitive Ribosome-recycling factor.</title>
        <authorList>
            <person name="Rolland N."/>
            <person name="Janosi L."/>
            <person name="Block M.A."/>
            <person name="Shuda M."/>
            <person name="Teyssier E."/>
            <person name="Miege C."/>
            <person name="Cheniclet C."/>
            <person name="Carde J.-P."/>
            <person name="Kaji A."/>
            <person name="Joyard J."/>
        </authorList>
    </citation>
    <scope>NUCLEOTIDE SEQUENCE [MRNA]</scope>
    <scope>PROTEIN SEQUENCE OF 79-88</scope>
    <source>
        <tissue>Leaf</tissue>
    </source>
</reference>
<reference key="2">
    <citation type="journal article" date="2000" name="J. Biol. Chem.">
        <title>The plastid ribosomal proteins. Identification of all the proteins in the 50S subunit of an organelle ribosome (chloroplast).</title>
        <authorList>
            <person name="Yamaguchi K."/>
            <person name="Subramanian A.R."/>
        </authorList>
    </citation>
    <scope>PROTEIN SEQUENCE OF 79-99 AND 194-217</scope>
    <source>
        <strain>cv. Alwaro</strain>
        <tissue>Leaf</tissue>
    </source>
</reference>
<reference key="3">
    <citation type="journal article" date="2007" name="Proc. Natl. Acad. Sci. U.S.A.">
        <title>Cryo-EM study of the spinach chloroplast ribosome reveals the structural and functional roles of plastid-specific ribosomal proteins.</title>
        <authorList>
            <person name="Sharma M.R."/>
            <person name="Wilson D.N."/>
            <person name="Datta P.P."/>
            <person name="Barat C."/>
            <person name="Schluenzen F."/>
            <person name="Fucini P."/>
            <person name="Agrawal R.K."/>
        </authorList>
    </citation>
    <scope>MODELING ON THE 70S RIBOSOME</scope>
    <scope>INTERACTION WITH PSRP1</scope>
</reference>
<proteinExistence type="evidence at protein level"/>
<evidence type="ECO:0000250" key="1"/>
<evidence type="ECO:0000255" key="2"/>
<evidence type="ECO:0000269" key="3">
    <source>
    </source>
</evidence>
<evidence type="ECO:0000269" key="4">
    <source>
    </source>
</evidence>
<evidence type="ECO:0000269" key="5">
    <source>
    </source>
</evidence>
<evidence type="ECO:0000305" key="6"/>
<dbReference type="EMBL" id="AJ133751">
    <property type="protein sequence ID" value="CAB41419.1"/>
    <property type="molecule type" value="mRNA"/>
</dbReference>
<dbReference type="PDB" id="5MLC">
    <property type="method" value="EM"/>
    <property type="resolution" value="3.90 A"/>
    <property type="chains" value="9=1-271"/>
</dbReference>
<dbReference type="PDB" id="6ERI">
    <property type="method" value="EM"/>
    <property type="resolution" value="3.00 A"/>
    <property type="chains" value="Az=79-269"/>
</dbReference>
<dbReference type="PDBsum" id="5MLC"/>
<dbReference type="PDBsum" id="6ERI"/>
<dbReference type="EMDB" id="EMD-3525"/>
<dbReference type="EMDB" id="EMD-3941"/>
<dbReference type="SMR" id="P82231"/>
<dbReference type="IntAct" id="P82231">
    <property type="interactions" value="1"/>
</dbReference>
<dbReference type="OrthoDB" id="407355at2759"/>
<dbReference type="Proteomes" id="UP001155700">
    <property type="component" value="Unplaced"/>
</dbReference>
<dbReference type="GO" id="GO:0009507">
    <property type="term" value="C:chloroplast"/>
    <property type="evidence" value="ECO:0000318"/>
    <property type="project" value="GO_Central"/>
</dbReference>
<dbReference type="GO" id="GO:0009570">
    <property type="term" value="C:chloroplast stroma"/>
    <property type="evidence" value="ECO:0007669"/>
    <property type="project" value="UniProtKB-SubCell"/>
</dbReference>
<dbReference type="GO" id="GO:0043023">
    <property type="term" value="F:ribosomal large subunit binding"/>
    <property type="evidence" value="ECO:0000318"/>
    <property type="project" value="GO_Central"/>
</dbReference>
<dbReference type="GO" id="GO:0032544">
    <property type="term" value="P:plastid translation"/>
    <property type="evidence" value="ECO:0000318"/>
    <property type="project" value="GO_Central"/>
</dbReference>
<dbReference type="CDD" id="cd00520">
    <property type="entry name" value="RRF"/>
    <property type="match status" value="1"/>
</dbReference>
<dbReference type="FunFam" id="3.30.1360.40:FF:000001">
    <property type="entry name" value="Ribosome-recycling factor"/>
    <property type="match status" value="1"/>
</dbReference>
<dbReference type="FunFam" id="1.10.132.20:FF:000017">
    <property type="entry name" value="Ribosome-recycling factor chloroplastic"/>
    <property type="match status" value="1"/>
</dbReference>
<dbReference type="Gene3D" id="3.30.1360.40">
    <property type="match status" value="1"/>
</dbReference>
<dbReference type="Gene3D" id="1.10.132.20">
    <property type="entry name" value="Ribosome-recycling factor"/>
    <property type="match status" value="1"/>
</dbReference>
<dbReference type="HAMAP" id="MF_00040">
    <property type="entry name" value="RRF"/>
    <property type="match status" value="1"/>
</dbReference>
<dbReference type="InterPro" id="IPR002661">
    <property type="entry name" value="Ribosome_recyc_fac"/>
</dbReference>
<dbReference type="InterPro" id="IPR023584">
    <property type="entry name" value="Ribosome_recyc_fac_dom"/>
</dbReference>
<dbReference type="InterPro" id="IPR036191">
    <property type="entry name" value="RRF_sf"/>
</dbReference>
<dbReference type="NCBIfam" id="TIGR00496">
    <property type="entry name" value="frr"/>
    <property type="match status" value="1"/>
</dbReference>
<dbReference type="PANTHER" id="PTHR20982:SF3">
    <property type="entry name" value="MITOCHONDRIAL RIBOSOME RECYCLING FACTOR PSEUDO 1"/>
    <property type="match status" value="1"/>
</dbReference>
<dbReference type="PANTHER" id="PTHR20982">
    <property type="entry name" value="RIBOSOME RECYCLING FACTOR"/>
    <property type="match status" value="1"/>
</dbReference>
<dbReference type="Pfam" id="PF01765">
    <property type="entry name" value="RRF"/>
    <property type="match status" value="1"/>
</dbReference>
<dbReference type="SUPFAM" id="SSF55194">
    <property type="entry name" value="Ribosome recycling factor, RRF"/>
    <property type="match status" value="1"/>
</dbReference>
<feature type="transit peptide" description="Chloroplast" evidence="3 4">
    <location>
        <begin position="1"/>
        <end position="78"/>
    </location>
</feature>
<feature type="chain" id="PRO_0000031085" description="Ribosome-recycling factor, chloroplastic">
    <location>
        <begin position="79"/>
        <end position="271"/>
    </location>
</feature>
<feature type="coiled-coil region" evidence="2">
    <location>
        <begin position="213"/>
        <end position="260"/>
    </location>
</feature>
<organism>
    <name type="scientific">Spinacia oleracea</name>
    <name type="common">Spinach</name>
    <dbReference type="NCBI Taxonomy" id="3562"/>
    <lineage>
        <taxon>Eukaryota</taxon>
        <taxon>Viridiplantae</taxon>
        <taxon>Streptophyta</taxon>
        <taxon>Embryophyta</taxon>
        <taxon>Tracheophyta</taxon>
        <taxon>Spermatophyta</taxon>
        <taxon>Magnoliopsida</taxon>
        <taxon>eudicotyledons</taxon>
        <taxon>Gunneridae</taxon>
        <taxon>Pentapetalae</taxon>
        <taxon>Caryophyllales</taxon>
        <taxon>Chenopodiaceae</taxon>
        <taxon>Chenopodioideae</taxon>
        <taxon>Anserineae</taxon>
        <taxon>Spinacia</taxon>
    </lineage>
</organism>
<keyword id="KW-0002">3D-structure</keyword>
<keyword id="KW-0150">Chloroplast</keyword>
<keyword id="KW-0175">Coiled coil</keyword>
<keyword id="KW-0903">Direct protein sequencing</keyword>
<keyword id="KW-0934">Plastid</keyword>
<keyword id="KW-0648">Protein biosynthesis</keyword>
<keyword id="KW-1185">Reference proteome</keyword>
<keyword id="KW-0809">Transit peptide</keyword>
<gene>
    <name type="primary">RRF</name>
    <name type="synonym">FRRHCP</name>
</gene>
<accession>P82231</accession>
<accession>Q9XG97</accession>
<name>RRFC_SPIOL</name>